<gene>
    <name type="primary">MT-CYB</name>
    <name type="synonym">COB</name>
    <name type="synonym">CYTB</name>
    <name type="synonym">MTCYB</name>
</gene>
<geneLocation type="mitochondrion"/>
<sequence>MMIMRKKHPLIKLINHSFIDLPAPSNISSWWNFGSLLGVCLMIQILTGLFLAMHYTSDTTTAFSSVAHICRDVNYGWLIRYLHANGASMFFICLFIHVGRGIYYGSYMLLETWNIGIILLLTTMATAFVGYVLPWGQMSFWGATVITNLLSAIPYIGTTLVEWIWGGFSVDKATLTRFFAFHFILPFIITALVLVHLLFLHETGSNNPSGLNSNSDKIPFHPYYTIKDLLGVLLLLMVLMILVLFFPDILGDPDNYTPANPLNTPAHIKPEWYFLFAYAILRSIPNKLGGVLALILSILILAAFPLLNYSKQHGLAYRPLTQFLYWVFIANLLVLTWIGGQPVEYPFTTIGQISSVLYFTIILVLMPTANAVENNILKLH</sequence>
<keyword id="KW-0249">Electron transport</keyword>
<keyword id="KW-0349">Heme</keyword>
<keyword id="KW-0408">Iron</keyword>
<keyword id="KW-0472">Membrane</keyword>
<keyword id="KW-0479">Metal-binding</keyword>
<keyword id="KW-0496">Mitochondrion</keyword>
<keyword id="KW-0999">Mitochondrion inner membrane</keyword>
<keyword id="KW-0679">Respiratory chain</keyword>
<keyword id="KW-0812">Transmembrane</keyword>
<keyword id="KW-1133">Transmembrane helix</keyword>
<keyword id="KW-0813">Transport</keyword>
<keyword id="KW-0830">Ubiquinone</keyword>
<proteinExistence type="inferred from homology"/>
<feature type="chain" id="PRO_0000255146" description="Cytochrome b">
    <location>
        <begin position="1"/>
        <end position="380"/>
    </location>
</feature>
<feature type="transmembrane region" description="Helical" evidence="2">
    <location>
        <begin position="33"/>
        <end position="53"/>
    </location>
</feature>
<feature type="transmembrane region" description="Helical" evidence="2">
    <location>
        <begin position="77"/>
        <end position="98"/>
    </location>
</feature>
<feature type="transmembrane region" description="Helical" evidence="2">
    <location>
        <begin position="113"/>
        <end position="133"/>
    </location>
</feature>
<feature type="transmembrane region" description="Helical" evidence="2">
    <location>
        <begin position="178"/>
        <end position="198"/>
    </location>
</feature>
<feature type="transmembrane region" description="Helical" evidence="2">
    <location>
        <begin position="226"/>
        <end position="246"/>
    </location>
</feature>
<feature type="transmembrane region" description="Helical" evidence="2">
    <location>
        <begin position="288"/>
        <end position="308"/>
    </location>
</feature>
<feature type="transmembrane region" description="Helical" evidence="2">
    <location>
        <begin position="320"/>
        <end position="340"/>
    </location>
</feature>
<feature type="transmembrane region" description="Helical" evidence="2">
    <location>
        <begin position="347"/>
        <end position="367"/>
    </location>
</feature>
<feature type="binding site" description="axial binding residue" evidence="2">
    <location>
        <position position="83"/>
    </location>
    <ligand>
        <name>heme b</name>
        <dbReference type="ChEBI" id="CHEBI:60344"/>
        <label>b562</label>
    </ligand>
    <ligandPart>
        <name>Fe</name>
        <dbReference type="ChEBI" id="CHEBI:18248"/>
    </ligandPart>
</feature>
<feature type="binding site" description="axial binding residue" evidence="2">
    <location>
        <position position="97"/>
    </location>
    <ligand>
        <name>heme b</name>
        <dbReference type="ChEBI" id="CHEBI:60344"/>
        <label>b566</label>
    </ligand>
    <ligandPart>
        <name>Fe</name>
        <dbReference type="ChEBI" id="CHEBI:18248"/>
    </ligandPart>
</feature>
<feature type="binding site" description="axial binding residue" evidence="2">
    <location>
        <position position="182"/>
    </location>
    <ligand>
        <name>heme b</name>
        <dbReference type="ChEBI" id="CHEBI:60344"/>
        <label>b562</label>
    </ligand>
    <ligandPart>
        <name>Fe</name>
        <dbReference type="ChEBI" id="CHEBI:18248"/>
    </ligandPart>
</feature>
<feature type="binding site" description="axial binding residue" evidence="2">
    <location>
        <position position="196"/>
    </location>
    <ligand>
        <name>heme b</name>
        <dbReference type="ChEBI" id="CHEBI:60344"/>
        <label>b566</label>
    </ligand>
    <ligandPart>
        <name>Fe</name>
        <dbReference type="ChEBI" id="CHEBI:18248"/>
    </ligandPart>
</feature>
<feature type="binding site" evidence="2">
    <location>
        <position position="201"/>
    </location>
    <ligand>
        <name>a ubiquinone</name>
        <dbReference type="ChEBI" id="CHEBI:16389"/>
    </ligand>
</feature>
<reference key="1">
    <citation type="journal article" date="1999" name="J. Mammal. Evol.">
        <title>Phylogenetic relationships and the radiation of Sigmodontine rodents in South America: evidence from cytochrome b.</title>
        <authorList>
            <person name="Smith M.F."/>
            <person name="Patton J.L."/>
        </authorList>
    </citation>
    <scope>NUCLEOTIDE SEQUENCE [GENOMIC DNA]</scope>
</reference>
<protein>
    <recommendedName>
        <fullName>Cytochrome b</fullName>
    </recommendedName>
    <alternativeName>
        <fullName>Complex III subunit 3</fullName>
    </alternativeName>
    <alternativeName>
        <fullName>Complex III subunit III</fullName>
    </alternativeName>
    <alternativeName>
        <fullName>Cytochrome b-c1 complex subunit 3</fullName>
    </alternativeName>
    <alternativeName>
        <fullName>Ubiquinol-cytochrome-c reductase complex cytochrome b subunit</fullName>
    </alternativeName>
</protein>
<name>CYB_THONO</name>
<evidence type="ECO:0000250" key="1"/>
<evidence type="ECO:0000250" key="2">
    <source>
        <dbReference type="UniProtKB" id="P00157"/>
    </source>
</evidence>
<evidence type="ECO:0000255" key="3">
    <source>
        <dbReference type="PROSITE-ProRule" id="PRU00967"/>
    </source>
</evidence>
<evidence type="ECO:0000255" key="4">
    <source>
        <dbReference type="PROSITE-ProRule" id="PRU00968"/>
    </source>
</evidence>
<dbReference type="EMBL" id="AF108676">
    <property type="protein sequence ID" value="AAD45458.1"/>
    <property type="molecule type" value="Genomic_DNA"/>
</dbReference>
<dbReference type="SMR" id="Q9XNW8"/>
<dbReference type="GO" id="GO:0005743">
    <property type="term" value="C:mitochondrial inner membrane"/>
    <property type="evidence" value="ECO:0007669"/>
    <property type="project" value="UniProtKB-SubCell"/>
</dbReference>
<dbReference type="GO" id="GO:0045275">
    <property type="term" value="C:respiratory chain complex III"/>
    <property type="evidence" value="ECO:0007669"/>
    <property type="project" value="InterPro"/>
</dbReference>
<dbReference type="GO" id="GO:0046872">
    <property type="term" value="F:metal ion binding"/>
    <property type="evidence" value="ECO:0007669"/>
    <property type="project" value="UniProtKB-KW"/>
</dbReference>
<dbReference type="GO" id="GO:0008121">
    <property type="term" value="F:ubiquinol-cytochrome-c reductase activity"/>
    <property type="evidence" value="ECO:0007669"/>
    <property type="project" value="InterPro"/>
</dbReference>
<dbReference type="GO" id="GO:0006122">
    <property type="term" value="P:mitochondrial electron transport, ubiquinol to cytochrome c"/>
    <property type="evidence" value="ECO:0007669"/>
    <property type="project" value="TreeGrafter"/>
</dbReference>
<dbReference type="CDD" id="cd00290">
    <property type="entry name" value="cytochrome_b_C"/>
    <property type="match status" value="1"/>
</dbReference>
<dbReference type="CDD" id="cd00284">
    <property type="entry name" value="Cytochrome_b_N"/>
    <property type="match status" value="1"/>
</dbReference>
<dbReference type="FunFam" id="1.20.810.10:FF:000002">
    <property type="entry name" value="Cytochrome b"/>
    <property type="match status" value="1"/>
</dbReference>
<dbReference type="Gene3D" id="1.20.810.10">
    <property type="entry name" value="Cytochrome Bc1 Complex, Chain C"/>
    <property type="match status" value="1"/>
</dbReference>
<dbReference type="InterPro" id="IPR005798">
    <property type="entry name" value="Cyt_b/b6_C"/>
</dbReference>
<dbReference type="InterPro" id="IPR036150">
    <property type="entry name" value="Cyt_b/b6_C_sf"/>
</dbReference>
<dbReference type="InterPro" id="IPR005797">
    <property type="entry name" value="Cyt_b/b6_N"/>
</dbReference>
<dbReference type="InterPro" id="IPR027387">
    <property type="entry name" value="Cytb/b6-like_sf"/>
</dbReference>
<dbReference type="InterPro" id="IPR030689">
    <property type="entry name" value="Cytochrome_b"/>
</dbReference>
<dbReference type="InterPro" id="IPR048260">
    <property type="entry name" value="Cytochrome_b_C_euk/bac"/>
</dbReference>
<dbReference type="InterPro" id="IPR048259">
    <property type="entry name" value="Cytochrome_b_N_euk/bac"/>
</dbReference>
<dbReference type="InterPro" id="IPR016174">
    <property type="entry name" value="Di-haem_cyt_TM"/>
</dbReference>
<dbReference type="PANTHER" id="PTHR19271">
    <property type="entry name" value="CYTOCHROME B"/>
    <property type="match status" value="1"/>
</dbReference>
<dbReference type="PANTHER" id="PTHR19271:SF16">
    <property type="entry name" value="CYTOCHROME B"/>
    <property type="match status" value="1"/>
</dbReference>
<dbReference type="Pfam" id="PF00032">
    <property type="entry name" value="Cytochrom_B_C"/>
    <property type="match status" value="1"/>
</dbReference>
<dbReference type="Pfam" id="PF00033">
    <property type="entry name" value="Cytochrome_B"/>
    <property type="match status" value="1"/>
</dbReference>
<dbReference type="PIRSF" id="PIRSF038885">
    <property type="entry name" value="COB"/>
    <property type="match status" value="1"/>
</dbReference>
<dbReference type="SUPFAM" id="SSF81648">
    <property type="entry name" value="a domain/subunit of cytochrome bc1 complex (Ubiquinol-cytochrome c reductase)"/>
    <property type="match status" value="1"/>
</dbReference>
<dbReference type="SUPFAM" id="SSF81342">
    <property type="entry name" value="Transmembrane di-heme cytochromes"/>
    <property type="match status" value="1"/>
</dbReference>
<dbReference type="PROSITE" id="PS51003">
    <property type="entry name" value="CYTB_CTER"/>
    <property type="match status" value="1"/>
</dbReference>
<dbReference type="PROSITE" id="PS51002">
    <property type="entry name" value="CYTB_NTER"/>
    <property type="match status" value="1"/>
</dbReference>
<accession>Q9XNW8</accession>
<organism>
    <name type="scientific">Thomasomys notatus</name>
    <name type="common">Distinguished oldfield mouse</name>
    <dbReference type="NCBI Taxonomy" id="89111"/>
    <lineage>
        <taxon>Eukaryota</taxon>
        <taxon>Metazoa</taxon>
        <taxon>Chordata</taxon>
        <taxon>Craniata</taxon>
        <taxon>Vertebrata</taxon>
        <taxon>Euteleostomi</taxon>
        <taxon>Mammalia</taxon>
        <taxon>Eutheria</taxon>
        <taxon>Euarchontoglires</taxon>
        <taxon>Glires</taxon>
        <taxon>Rodentia</taxon>
        <taxon>Myomorpha</taxon>
        <taxon>Muroidea</taxon>
        <taxon>Cricetidae</taxon>
        <taxon>Sigmodontinae</taxon>
        <taxon>Thomasomys</taxon>
    </lineage>
</organism>
<comment type="function">
    <text evidence="2">Component of the ubiquinol-cytochrome c reductase complex (complex III or cytochrome b-c1 complex) that is part of the mitochondrial respiratory chain. The b-c1 complex mediates electron transfer from ubiquinol to cytochrome c. Contributes to the generation of a proton gradient across the mitochondrial membrane that is then used for ATP synthesis.</text>
</comment>
<comment type="cofactor">
    <cofactor evidence="2">
        <name>heme b</name>
        <dbReference type="ChEBI" id="CHEBI:60344"/>
    </cofactor>
    <text evidence="2">Binds 2 heme b groups non-covalently.</text>
</comment>
<comment type="subunit">
    <text evidence="2">The cytochrome bc1 complex contains 11 subunits: 3 respiratory subunits (MT-CYB, CYC1 and UQCRFS1), 2 core proteins (UQCRC1 and UQCRC2) and 6 low-molecular weight proteins (UQCRH/QCR6, UQCRB/QCR7, UQCRQ/QCR8, UQCR10/QCR9, UQCR11/QCR10 and a cleavage product of UQCRFS1). This cytochrome bc1 complex then forms a dimer.</text>
</comment>
<comment type="subcellular location">
    <subcellularLocation>
        <location evidence="2">Mitochondrion inner membrane</location>
        <topology evidence="2">Multi-pass membrane protein</topology>
    </subcellularLocation>
</comment>
<comment type="miscellaneous">
    <text evidence="1">Heme 1 (or BL or b562) is low-potential and absorbs at about 562 nm, and heme 2 (or BH or b566) is high-potential and absorbs at about 566 nm.</text>
</comment>
<comment type="similarity">
    <text evidence="3 4">Belongs to the cytochrome b family.</text>
</comment>
<comment type="caution">
    <text evidence="2">The full-length protein contains only eight transmembrane helices, not nine as predicted by bioinformatics tools.</text>
</comment>